<protein>
    <recommendedName>
        <fullName evidence="1">Large ribosomal subunit protein bL9</fullName>
    </recommendedName>
    <alternativeName>
        <fullName evidence="2">50S ribosomal protein L9</fullName>
    </alternativeName>
</protein>
<sequence>MKVIFLKDVKGKGKKGEVKNVPDGYANNFLLKQGLAAEATNSSMKTLEAQKRKEEKDAAAELESAKQLKETLEKLTVELKAKSGEGGRLFGSITSKQIVDAMQKSHKIKLDKRKFEMDDAIRALGYTNVTVKLHPQVTATVKVHVSEQ</sequence>
<proteinExistence type="inferred from homology"/>
<evidence type="ECO:0000255" key="1">
    <source>
        <dbReference type="HAMAP-Rule" id="MF_00503"/>
    </source>
</evidence>
<evidence type="ECO:0000305" key="2"/>
<accession>A0RLP8</accession>
<reference key="1">
    <citation type="journal article" date="2007" name="J. Bacteriol.">
        <title>The complete genome sequence of Bacillus thuringiensis Al Hakam.</title>
        <authorList>
            <person name="Challacombe J.F."/>
            <person name="Altherr M.R."/>
            <person name="Xie G."/>
            <person name="Bhotika S.S."/>
            <person name="Brown N."/>
            <person name="Bruce D."/>
            <person name="Campbell C.S."/>
            <person name="Campbell M.L."/>
            <person name="Chen J."/>
            <person name="Chertkov O."/>
            <person name="Cleland C."/>
            <person name="Dimitrijevic M."/>
            <person name="Doggett N.A."/>
            <person name="Fawcett J.J."/>
            <person name="Glavina T."/>
            <person name="Goodwin L.A."/>
            <person name="Green L.D."/>
            <person name="Han C.S."/>
            <person name="Hill K.K."/>
            <person name="Hitchcock P."/>
            <person name="Jackson P.J."/>
            <person name="Keim P."/>
            <person name="Kewalramani A.R."/>
            <person name="Longmire J."/>
            <person name="Lucas S."/>
            <person name="Malfatti S."/>
            <person name="Martinez D."/>
            <person name="McMurry K."/>
            <person name="Meincke L.J."/>
            <person name="Misra M."/>
            <person name="Moseman B.L."/>
            <person name="Mundt M."/>
            <person name="Munk A.C."/>
            <person name="Okinaka R.T."/>
            <person name="Parson-Quintana B."/>
            <person name="Reilly L.P."/>
            <person name="Richardson P."/>
            <person name="Robinson D.L."/>
            <person name="Saunders E."/>
            <person name="Tapia R."/>
            <person name="Tesmer J.G."/>
            <person name="Thayer N."/>
            <person name="Thompson L.S."/>
            <person name="Tice H."/>
            <person name="Ticknor L.O."/>
            <person name="Wills P.L."/>
            <person name="Gilna P."/>
            <person name="Brettin T.S."/>
        </authorList>
    </citation>
    <scope>NUCLEOTIDE SEQUENCE [LARGE SCALE GENOMIC DNA]</scope>
    <source>
        <strain>Al Hakam</strain>
    </source>
</reference>
<gene>
    <name evidence="1" type="primary">rplI</name>
    <name type="ordered locus">BALH_4976</name>
</gene>
<dbReference type="EMBL" id="CP000485">
    <property type="protein sequence ID" value="ABK88141.1"/>
    <property type="molecule type" value="Genomic_DNA"/>
</dbReference>
<dbReference type="RefSeq" id="WP_000864235.1">
    <property type="nucleotide sequence ID" value="NC_008600.1"/>
</dbReference>
<dbReference type="SMR" id="A0RLP8"/>
<dbReference type="GeneID" id="83639160"/>
<dbReference type="KEGG" id="btl:BALH_4976"/>
<dbReference type="HOGENOM" id="CLU_078938_3_2_9"/>
<dbReference type="GO" id="GO:1990904">
    <property type="term" value="C:ribonucleoprotein complex"/>
    <property type="evidence" value="ECO:0007669"/>
    <property type="project" value="UniProtKB-KW"/>
</dbReference>
<dbReference type="GO" id="GO:0005840">
    <property type="term" value="C:ribosome"/>
    <property type="evidence" value="ECO:0007669"/>
    <property type="project" value="UniProtKB-KW"/>
</dbReference>
<dbReference type="GO" id="GO:0019843">
    <property type="term" value="F:rRNA binding"/>
    <property type="evidence" value="ECO:0007669"/>
    <property type="project" value="UniProtKB-UniRule"/>
</dbReference>
<dbReference type="GO" id="GO:0003735">
    <property type="term" value="F:structural constituent of ribosome"/>
    <property type="evidence" value="ECO:0007669"/>
    <property type="project" value="InterPro"/>
</dbReference>
<dbReference type="GO" id="GO:0006412">
    <property type="term" value="P:translation"/>
    <property type="evidence" value="ECO:0007669"/>
    <property type="project" value="UniProtKB-UniRule"/>
</dbReference>
<dbReference type="FunFam" id="3.10.430.100:FF:000002">
    <property type="entry name" value="50S ribosomal protein L9"/>
    <property type="match status" value="1"/>
</dbReference>
<dbReference type="FunFam" id="3.40.5.10:FF:000002">
    <property type="entry name" value="50S ribosomal protein L9"/>
    <property type="match status" value="1"/>
</dbReference>
<dbReference type="Gene3D" id="3.10.430.100">
    <property type="entry name" value="Ribosomal protein L9, C-terminal domain"/>
    <property type="match status" value="1"/>
</dbReference>
<dbReference type="Gene3D" id="3.40.5.10">
    <property type="entry name" value="Ribosomal protein L9, N-terminal domain"/>
    <property type="match status" value="1"/>
</dbReference>
<dbReference type="HAMAP" id="MF_00503">
    <property type="entry name" value="Ribosomal_bL9"/>
    <property type="match status" value="1"/>
</dbReference>
<dbReference type="InterPro" id="IPR000244">
    <property type="entry name" value="Ribosomal_bL9"/>
</dbReference>
<dbReference type="InterPro" id="IPR009027">
    <property type="entry name" value="Ribosomal_bL9/RNase_H1_N"/>
</dbReference>
<dbReference type="InterPro" id="IPR020594">
    <property type="entry name" value="Ribosomal_bL9_bac/chp"/>
</dbReference>
<dbReference type="InterPro" id="IPR020069">
    <property type="entry name" value="Ribosomal_bL9_C"/>
</dbReference>
<dbReference type="InterPro" id="IPR036791">
    <property type="entry name" value="Ribosomal_bL9_C_sf"/>
</dbReference>
<dbReference type="InterPro" id="IPR020070">
    <property type="entry name" value="Ribosomal_bL9_N"/>
</dbReference>
<dbReference type="InterPro" id="IPR036935">
    <property type="entry name" value="Ribosomal_bL9_N_sf"/>
</dbReference>
<dbReference type="NCBIfam" id="TIGR00158">
    <property type="entry name" value="L9"/>
    <property type="match status" value="1"/>
</dbReference>
<dbReference type="PANTHER" id="PTHR21368">
    <property type="entry name" value="50S RIBOSOMAL PROTEIN L9"/>
    <property type="match status" value="1"/>
</dbReference>
<dbReference type="Pfam" id="PF03948">
    <property type="entry name" value="Ribosomal_L9_C"/>
    <property type="match status" value="1"/>
</dbReference>
<dbReference type="Pfam" id="PF01281">
    <property type="entry name" value="Ribosomal_L9_N"/>
    <property type="match status" value="1"/>
</dbReference>
<dbReference type="SUPFAM" id="SSF55658">
    <property type="entry name" value="L9 N-domain-like"/>
    <property type="match status" value="1"/>
</dbReference>
<dbReference type="SUPFAM" id="SSF55653">
    <property type="entry name" value="Ribosomal protein L9 C-domain"/>
    <property type="match status" value="1"/>
</dbReference>
<dbReference type="PROSITE" id="PS00651">
    <property type="entry name" value="RIBOSOMAL_L9"/>
    <property type="match status" value="1"/>
</dbReference>
<organism>
    <name type="scientific">Bacillus thuringiensis (strain Al Hakam)</name>
    <dbReference type="NCBI Taxonomy" id="412694"/>
    <lineage>
        <taxon>Bacteria</taxon>
        <taxon>Bacillati</taxon>
        <taxon>Bacillota</taxon>
        <taxon>Bacilli</taxon>
        <taxon>Bacillales</taxon>
        <taxon>Bacillaceae</taxon>
        <taxon>Bacillus</taxon>
        <taxon>Bacillus cereus group</taxon>
    </lineage>
</organism>
<name>RL9_BACAH</name>
<feature type="chain" id="PRO_1000014740" description="Large ribosomal subunit protein bL9">
    <location>
        <begin position="1"/>
        <end position="148"/>
    </location>
</feature>
<keyword id="KW-0687">Ribonucleoprotein</keyword>
<keyword id="KW-0689">Ribosomal protein</keyword>
<keyword id="KW-0694">RNA-binding</keyword>
<keyword id="KW-0699">rRNA-binding</keyword>
<comment type="function">
    <text evidence="1">Binds to the 23S rRNA.</text>
</comment>
<comment type="similarity">
    <text evidence="1">Belongs to the bacterial ribosomal protein bL9 family.</text>
</comment>